<sequence length="169" mass="19291">MIVGVGIDVLEVERVPEKFAERILGESEKRLFLTRKRRREFIAGRFALKEAFFKALGTGLNGHSFTDVEFLESNGKPVLCVHKDFGFFNYAHVSLSHDRFAVALVVLEKRKGDIIVEGDESFLRKRFEVLERSVEGWEIETSLPPFTLKKLLESSGCRLVRYGNILIGE</sequence>
<comment type="function">
    <text evidence="1">Transfers the 4'-phosphopantetheine moiety from coenzyme A to a Ser of acyl-carrier-protein.</text>
</comment>
<comment type="catalytic activity">
    <reaction evidence="1">
        <text>apo-[ACP] + CoA = holo-[ACP] + adenosine 3',5'-bisphosphate + H(+)</text>
        <dbReference type="Rhea" id="RHEA:12068"/>
        <dbReference type="Rhea" id="RHEA-COMP:9685"/>
        <dbReference type="Rhea" id="RHEA-COMP:9690"/>
        <dbReference type="ChEBI" id="CHEBI:15378"/>
        <dbReference type="ChEBI" id="CHEBI:29999"/>
        <dbReference type="ChEBI" id="CHEBI:57287"/>
        <dbReference type="ChEBI" id="CHEBI:58343"/>
        <dbReference type="ChEBI" id="CHEBI:64479"/>
        <dbReference type="EC" id="2.7.8.7"/>
    </reaction>
</comment>
<comment type="cofactor">
    <cofactor evidence="1">
        <name>Mg(2+)</name>
        <dbReference type="ChEBI" id="CHEBI:18420"/>
    </cofactor>
</comment>
<comment type="subcellular location">
    <subcellularLocation>
        <location evidence="1">Cytoplasm</location>
    </subcellularLocation>
</comment>
<comment type="similarity">
    <text evidence="1">Belongs to the P-Pant transferase superfamily. AcpS family.</text>
</comment>
<accession>Q9WZF6</accession>
<name>ACPS_THEMA</name>
<protein>
    <recommendedName>
        <fullName evidence="1">Holo-[acyl-carrier-protein] synthase</fullName>
        <shortName evidence="1">Holo-ACP synthase</shortName>
        <ecNumber evidence="1">2.7.8.7</ecNumber>
    </recommendedName>
    <alternativeName>
        <fullName evidence="1">4'-phosphopantetheinyl transferase AcpS</fullName>
    </alternativeName>
</protein>
<proteinExistence type="evidence at protein level"/>
<dbReference type="EC" id="2.7.8.7" evidence="1"/>
<dbReference type="EMBL" id="AE000512">
    <property type="protein sequence ID" value="AAD35774.1"/>
    <property type="molecule type" value="Genomic_DNA"/>
</dbReference>
<dbReference type="PIR" id="B72345">
    <property type="entry name" value="B72345"/>
</dbReference>
<dbReference type="RefSeq" id="NP_228501.1">
    <property type="nucleotide sequence ID" value="NC_000853.1"/>
</dbReference>
<dbReference type="RefSeq" id="WP_004081065.1">
    <property type="nucleotide sequence ID" value="NZ_CP011107.1"/>
</dbReference>
<dbReference type="PDB" id="5XUM">
    <property type="method" value="X-ray"/>
    <property type="resolution" value="2.10 A"/>
    <property type="chains" value="A=1-169"/>
</dbReference>
<dbReference type="PDBsum" id="5XUM"/>
<dbReference type="SMR" id="Q9WZF6"/>
<dbReference type="FunCoup" id="Q9WZF6">
    <property type="interactions" value="94"/>
</dbReference>
<dbReference type="STRING" id="243274.TM_0692"/>
<dbReference type="PaxDb" id="243274-THEMA_01205"/>
<dbReference type="EnsemblBacteria" id="AAD35774">
    <property type="protein sequence ID" value="AAD35774"/>
    <property type="gene ID" value="TM_0692"/>
</dbReference>
<dbReference type="KEGG" id="tma:TM0692"/>
<dbReference type="KEGG" id="tmi:THEMA_01205"/>
<dbReference type="KEGG" id="tmm:Tmari_0692"/>
<dbReference type="KEGG" id="tmw:THMA_0707"/>
<dbReference type="eggNOG" id="COG0736">
    <property type="taxonomic scope" value="Bacteria"/>
</dbReference>
<dbReference type="InParanoid" id="Q9WZF6"/>
<dbReference type="OrthoDB" id="517356at2"/>
<dbReference type="Proteomes" id="UP000008183">
    <property type="component" value="Chromosome"/>
</dbReference>
<dbReference type="GO" id="GO:0005829">
    <property type="term" value="C:cytosol"/>
    <property type="evidence" value="ECO:0000318"/>
    <property type="project" value="GO_Central"/>
</dbReference>
<dbReference type="GO" id="GO:0008897">
    <property type="term" value="F:holo-[acyl-carrier-protein] synthase activity"/>
    <property type="evidence" value="ECO:0000318"/>
    <property type="project" value="GO_Central"/>
</dbReference>
<dbReference type="GO" id="GO:0000287">
    <property type="term" value="F:magnesium ion binding"/>
    <property type="evidence" value="ECO:0007669"/>
    <property type="project" value="UniProtKB-UniRule"/>
</dbReference>
<dbReference type="GO" id="GO:0006633">
    <property type="term" value="P:fatty acid biosynthetic process"/>
    <property type="evidence" value="ECO:0007669"/>
    <property type="project" value="UniProtKB-UniRule"/>
</dbReference>
<dbReference type="GO" id="GO:0019878">
    <property type="term" value="P:lysine biosynthetic process via aminoadipic acid"/>
    <property type="evidence" value="ECO:0000318"/>
    <property type="project" value="GO_Central"/>
</dbReference>
<dbReference type="Gene3D" id="3.90.470.20">
    <property type="entry name" value="4'-phosphopantetheinyl transferase domain"/>
    <property type="match status" value="1"/>
</dbReference>
<dbReference type="HAMAP" id="MF_00101">
    <property type="entry name" value="AcpS"/>
    <property type="match status" value="1"/>
</dbReference>
<dbReference type="InterPro" id="IPR008278">
    <property type="entry name" value="4-PPantetheinyl_Trfase_dom"/>
</dbReference>
<dbReference type="InterPro" id="IPR037143">
    <property type="entry name" value="4-PPantetheinyl_Trfase_dom_sf"/>
</dbReference>
<dbReference type="InterPro" id="IPR002582">
    <property type="entry name" value="ACPS"/>
</dbReference>
<dbReference type="InterPro" id="IPR004568">
    <property type="entry name" value="Ppantetheine-prot_Trfase_dom"/>
</dbReference>
<dbReference type="NCBIfam" id="TIGR00516">
    <property type="entry name" value="acpS"/>
    <property type="match status" value="1"/>
</dbReference>
<dbReference type="NCBIfam" id="TIGR00556">
    <property type="entry name" value="pantethn_trn"/>
    <property type="match status" value="1"/>
</dbReference>
<dbReference type="NCBIfam" id="NF011255">
    <property type="entry name" value="PRK14661.1"/>
    <property type="match status" value="1"/>
</dbReference>
<dbReference type="Pfam" id="PF01648">
    <property type="entry name" value="ACPS"/>
    <property type="match status" value="1"/>
</dbReference>
<dbReference type="SUPFAM" id="SSF56214">
    <property type="entry name" value="4'-phosphopantetheinyl transferase"/>
    <property type="match status" value="1"/>
</dbReference>
<evidence type="ECO:0000255" key="1">
    <source>
        <dbReference type="HAMAP-Rule" id="MF_00101"/>
    </source>
</evidence>
<evidence type="ECO:0007829" key="2">
    <source>
        <dbReference type="PDB" id="5XUM"/>
    </source>
</evidence>
<feature type="chain" id="PRO_0000175720" description="Holo-[acyl-carrier-protein] synthase">
    <location>
        <begin position="1"/>
        <end position="169"/>
    </location>
</feature>
<feature type="binding site" evidence="1">
    <location>
        <position position="8"/>
    </location>
    <ligand>
        <name>Mg(2+)</name>
        <dbReference type="ChEBI" id="CHEBI:18420"/>
    </ligand>
</feature>
<feature type="binding site" evidence="1">
    <location>
        <position position="50"/>
    </location>
    <ligand>
        <name>Mg(2+)</name>
        <dbReference type="ChEBI" id="CHEBI:18420"/>
    </ligand>
</feature>
<feature type="strand" evidence="2">
    <location>
        <begin position="2"/>
        <end position="11"/>
    </location>
</feature>
<feature type="helix" evidence="2">
    <location>
        <begin position="12"/>
        <end position="14"/>
    </location>
</feature>
<feature type="helix" evidence="2">
    <location>
        <begin position="17"/>
        <end position="19"/>
    </location>
</feature>
<feature type="helix" evidence="2">
    <location>
        <begin position="20"/>
        <end position="23"/>
    </location>
</feature>
<feature type="helix" evidence="2">
    <location>
        <begin position="26"/>
        <end position="34"/>
    </location>
</feature>
<feature type="helix" evidence="2">
    <location>
        <begin position="38"/>
        <end position="56"/>
    </location>
</feature>
<feature type="strand" evidence="2">
    <location>
        <begin position="60"/>
        <end position="62"/>
    </location>
</feature>
<feature type="helix" evidence="2">
    <location>
        <begin position="65"/>
        <end position="67"/>
    </location>
</feature>
<feature type="strand" evidence="2">
    <location>
        <begin position="68"/>
        <end position="73"/>
    </location>
</feature>
<feature type="strand" evidence="2">
    <location>
        <begin position="76"/>
        <end position="83"/>
    </location>
</feature>
<feature type="strand" evidence="2">
    <location>
        <begin position="90"/>
        <end position="108"/>
    </location>
</feature>
<feature type="strand" evidence="2">
    <location>
        <begin position="114"/>
        <end position="118"/>
    </location>
</feature>
<feature type="helix" evidence="2">
    <location>
        <begin position="120"/>
        <end position="126"/>
    </location>
</feature>
<feature type="strand" evidence="2">
    <location>
        <begin position="127"/>
        <end position="132"/>
    </location>
</feature>
<feature type="strand" evidence="2">
    <location>
        <begin position="137"/>
        <end position="140"/>
    </location>
</feature>
<feature type="helix" evidence="2">
    <location>
        <begin position="145"/>
        <end position="154"/>
    </location>
</feature>
<feature type="strand" evidence="2">
    <location>
        <begin position="158"/>
        <end position="162"/>
    </location>
</feature>
<feature type="strand" evidence="2">
    <location>
        <begin position="165"/>
        <end position="167"/>
    </location>
</feature>
<gene>
    <name evidence="1" type="primary">acpS</name>
    <name type="ordered locus">TM_0692</name>
</gene>
<keyword id="KW-0002">3D-structure</keyword>
<keyword id="KW-0963">Cytoplasm</keyword>
<keyword id="KW-0275">Fatty acid biosynthesis</keyword>
<keyword id="KW-0276">Fatty acid metabolism</keyword>
<keyword id="KW-0444">Lipid biosynthesis</keyword>
<keyword id="KW-0443">Lipid metabolism</keyword>
<keyword id="KW-0460">Magnesium</keyword>
<keyword id="KW-0479">Metal-binding</keyword>
<keyword id="KW-1185">Reference proteome</keyword>
<keyword id="KW-0808">Transferase</keyword>
<organism>
    <name type="scientific">Thermotoga maritima (strain ATCC 43589 / DSM 3109 / JCM 10099 / NBRC 100826 / MSB8)</name>
    <dbReference type="NCBI Taxonomy" id="243274"/>
    <lineage>
        <taxon>Bacteria</taxon>
        <taxon>Thermotogati</taxon>
        <taxon>Thermotogota</taxon>
        <taxon>Thermotogae</taxon>
        <taxon>Thermotogales</taxon>
        <taxon>Thermotogaceae</taxon>
        <taxon>Thermotoga</taxon>
    </lineage>
</organism>
<reference key="1">
    <citation type="journal article" date="1999" name="Nature">
        <title>Evidence for lateral gene transfer between Archaea and Bacteria from genome sequence of Thermotoga maritima.</title>
        <authorList>
            <person name="Nelson K.E."/>
            <person name="Clayton R.A."/>
            <person name="Gill S.R."/>
            <person name="Gwinn M.L."/>
            <person name="Dodson R.J."/>
            <person name="Haft D.H."/>
            <person name="Hickey E.K."/>
            <person name="Peterson J.D."/>
            <person name="Nelson W.C."/>
            <person name="Ketchum K.A."/>
            <person name="McDonald L.A."/>
            <person name="Utterback T.R."/>
            <person name="Malek J.A."/>
            <person name="Linher K.D."/>
            <person name="Garrett M.M."/>
            <person name="Stewart A.M."/>
            <person name="Cotton M.D."/>
            <person name="Pratt M.S."/>
            <person name="Phillips C.A."/>
            <person name="Richardson D.L."/>
            <person name="Heidelberg J.F."/>
            <person name="Sutton G.G."/>
            <person name="Fleischmann R.D."/>
            <person name="Eisen J.A."/>
            <person name="White O."/>
            <person name="Salzberg S.L."/>
            <person name="Smith H.O."/>
            <person name="Venter J.C."/>
            <person name="Fraser C.M."/>
        </authorList>
    </citation>
    <scope>NUCLEOTIDE SEQUENCE [LARGE SCALE GENOMIC DNA]</scope>
    <source>
        <strain>ATCC 43589 / DSM 3109 / JCM 10099 / NBRC 100826 / MSB8</strain>
    </source>
</reference>